<protein>
    <recommendedName>
        <fullName evidence="1">Acetyl-coenzyme A carboxylase carboxyl transferase subunit alpha</fullName>
        <shortName evidence="1">ACCase subunit alpha</shortName>
        <shortName evidence="1">Acetyl-CoA carboxylase carboxyltransferase subunit alpha</shortName>
        <ecNumber evidence="1">2.1.3.15</ecNumber>
    </recommendedName>
</protein>
<proteinExistence type="inferred from homology"/>
<name>ACCA_CUPNH</name>
<gene>
    <name evidence="1" type="primary">accA</name>
    <name type="ordered locus">H16_A1223</name>
</gene>
<feature type="chain" id="PRO_1000062660" description="Acetyl-coenzyme A carboxylase carboxyl transferase subunit alpha">
    <location>
        <begin position="1"/>
        <end position="323"/>
    </location>
</feature>
<feature type="domain" description="CoA carboxyltransferase C-terminal" evidence="2">
    <location>
        <begin position="39"/>
        <end position="293"/>
    </location>
</feature>
<reference key="1">
    <citation type="journal article" date="2006" name="Nat. Biotechnol.">
        <title>Genome sequence of the bioplastic-producing 'Knallgas' bacterium Ralstonia eutropha H16.</title>
        <authorList>
            <person name="Pohlmann A."/>
            <person name="Fricke W.F."/>
            <person name="Reinecke F."/>
            <person name="Kusian B."/>
            <person name="Liesegang H."/>
            <person name="Cramm R."/>
            <person name="Eitinger T."/>
            <person name="Ewering C."/>
            <person name="Poetter M."/>
            <person name="Schwartz E."/>
            <person name="Strittmatter A."/>
            <person name="Voss I."/>
            <person name="Gottschalk G."/>
            <person name="Steinbuechel A."/>
            <person name="Friedrich B."/>
            <person name="Bowien B."/>
        </authorList>
    </citation>
    <scope>NUCLEOTIDE SEQUENCE [LARGE SCALE GENOMIC DNA]</scope>
    <source>
        <strain>ATCC 17699 / DSM 428 / KCTC 22496 / NCIMB 10442 / H16 / Stanier 337</strain>
    </source>
</reference>
<evidence type="ECO:0000255" key="1">
    <source>
        <dbReference type="HAMAP-Rule" id="MF_00823"/>
    </source>
</evidence>
<evidence type="ECO:0000255" key="2">
    <source>
        <dbReference type="PROSITE-ProRule" id="PRU01137"/>
    </source>
</evidence>
<sequence>MKTTFLDFEQPIAELEAKIEELRFVQDDSAVDISEEISRLAGKSQQLTKDIYANLTPWQVAQIARHPQRPYTLDYVREIFTDFHELHGDRTFADDLSIIGGLARFNGQACMVIGHQKGRDTKERAMRNFGMPKPEGYRKAKRLMELADKFGLPIFTFVDTPGAFPGIDAEERGQSEAIGHNLYVMAGLKVPLIATIIGEGGSGGALAIAVGDVVQMLQFATYAVISPEGCASILWKTAEKAPEAAEALGLTAHRLKALGLIDKIVSEPLGGAHRDYKGMAAMLKRSLAESLRQFQGMSVKELQARRYERLLAYGKFKETGTQD</sequence>
<keyword id="KW-0067">ATP-binding</keyword>
<keyword id="KW-0963">Cytoplasm</keyword>
<keyword id="KW-0275">Fatty acid biosynthesis</keyword>
<keyword id="KW-0276">Fatty acid metabolism</keyword>
<keyword id="KW-0444">Lipid biosynthesis</keyword>
<keyword id="KW-0443">Lipid metabolism</keyword>
<keyword id="KW-0547">Nucleotide-binding</keyword>
<keyword id="KW-1185">Reference proteome</keyword>
<keyword id="KW-0808">Transferase</keyword>
<organism>
    <name type="scientific">Cupriavidus necator (strain ATCC 17699 / DSM 428 / KCTC 22496 / NCIMB 10442 / H16 / Stanier 337)</name>
    <name type="common">Ralstonia eutropha</name>
    <dbReference type="NCBI Taxonomy" id="381666"/>
    <lineage>
        <taxon>Bacteria</taxon>
        <taxon>Pseudomonadati</taxon>
        <taxon>Pseudomonadota</taxon>
        <taxon>Betaproteobacteria</taxon>
        <taxon>Burkholderiales</taxon>
        <taxon>Burkholderiaceae</taxon>
        <taxon>Cupriavidus</taxon>
    </lineage>
</organism>
<dbReference type="EC" id="2.1.3.15" evidence="1"/>
<dbReference type="EMBL" id="AM260479">
    <property type="protein sequence ID" value="CAJ92364.1"/>
    <property type="molecule type" value="Genomic_DNA"/>
</dbReference>
<dbReference type="RefSeq" id="WP_010808961.1">
    <property type="nucleotide sequence ID" value="NZ_CP039287.1"/>
</dbReference>
<dbReference type="SMR" id="Q0KCA7"/>
<dbReference type="STRING" id="381666.H16_A1223"/>
<dbReference type="KEGG" id="reh:H16_A1223"/>
<dbReference type="eggNOG" id="COG0825">
    <property type="taxonomic scope" value="Bacteria"/>
</dbReference>
<dbReference type="HOGENOM" id="CLU_015486_0_2_4"/>
<dbReference type="OrthoDB" id="9808023at2"/>
<dbReference type="UniPathway" id="UPA00655">
    <property type="reaction ID" value="UER00711"/>
</dbReference>
<dbReference type="Proteomes" id="UP000008210">
    <property type="component" value="Chromosome 1"/>
</dbReference>
<dbReference type="GO" id="GO:0009317">
    <property type="term" value="C:acetyl-CoA carboxylase complex"/>
    <property type="evidence" value="ECO:0007669"/>
    <property type="project" value="InterPro"/>
</dbReference>
<dbReference type="GO" id="GO:0003989">
    <property type="term" value="F:acetyl-CoA carboxylase activity"/>
    <property type="evidence" value="ECO:0007669"/>
    <property type="project" value="InterPro"/>
</dbReference>
<dbReference type="GO" id="GO:0005524">
    <property type="term" value="F:ATP binding"/>
    <property type="evidence" value="ECO:0007669"/>
    <property type="project" value="UniProtKB-KW"/>
</dbReference>
<dbReference type="GO" id="GO:0016743">
    <property type="term" value="F:carboxyl- or carbamoyltransferase activity"/>
    <property type="evidence" value="ECO:0007669"/>
    <property type="project" value="UniProtKB-UniRule"/>
</dbReference>
<dbReference type="GO" id="GO:0006633">
    <property type="term" value="P:fatty acid biosynthetic process"/>
    <property type="evidence" value="ECO:0007669"/>
    <property type="project" value="UniProtKB-KW"/>
</dbReference>
<dbReference type="GO" id="GO:2001295">
    <property type="term" value="P:malonyl-CoA biosynthetic process"/>
    <property type="evidence" value="ECO:0007669"/>
    <property type="project" value="UniProtKB-UniRule"/>
</dbReference>
<dbReference type="Gene3D" id="3.90.226.10">
    <property type="entry name" value="2-enoyl-CoA Hydratase, Chain A, domain 1"/>
    <property type="match status" value="1"/>
</dbReference>
<dbReference type="HAMAP" id="MF_00823">
    <property type="entry name" value="AcetylCoA_CT_alpha"/>
    <property type="match status" value="1"/>
</dbReference>
<dbReference type="InterPro" id="IPR001095">
    <property type="entry name" value="Acetyl_CoA_COase_a_su"/>
</dbReference>
<dbReference type="InterPro" id="IPR029045">
    <property type="entry name" value="ClpP/crotonase-like_dom_sf"/>
</dbReference>
<dbReference type="InterPro" id="IPR011763">
    <property type="entry name" value="COA_CT_C"/>
</dbReference>
<dbReference type="NCBIfam" id="TIGR00513">
    <property type="entry name" value="accA"/>
    <property type="match status" value="1"/>
</dbReference>
<dbReference type="NCBIfam" id="NF041504">
    <property type="entry name" value="AccA_sub"/>
    <property type="match status" value="1"/>
</dbReference>
<dbReference type="NCBIfam" id="NF004344">
    <property type="entry name" value="PRK05724.1"/>
    <property type="match status" value="1"/>
</dbReference>
<dbReference type="PANTHER" id="PTHR42853">
    <property type="entry name" value="ACETYL-COENZYME A CARBOXYLASE CARBOXYL TRANSFERASE SUBUNIT ALPHA"/>
    <property type="match status" value="1"/>
</dbReference>
<dbReference type="PANTHER" id="PTHR42853:SF3">
    <property type="entry name" value="ACETYL-COENZYME A CARBOXYLASE CARBOXYL TRANSFERASE SUBUNIT ALPHA, CHLOROPLASTIC"/>
    <property type="match status" value="1"/>
</dbReference>
<dbReference type="Pfam" id="PF03255">
    <property type="entry name" value="ACCA"/>
    <property type="match status" value="1"/>
</dbReference>
<dbReference type="PRINTS" id="PR01069">
    <property type="entry name" value="ACCCTRFRASEA"/>
</dbReference>
<dbReference type="SUPFAM" id="SSF52096">
    <property type="entry name" value="ClpP/crotonase"/>
    <property type="match status" value="1"/>
</dbReference>
<dbReference type="PROSITE" id="PS50989">
    <property type="entry name" value="COA_CT_CTER"/>
    <property type="match status" value="1"/>
</dbReference>
<accession>Q0KCA7</accession>
<comment type="function">
    <text evidence="1">Component of the acetyl coenzyme A carboxylase (ACC) complex. First, biotin carboxylase catalyzes the carboxylation of biotin on its carrier protein (BCCP) and then the CO(2) group is transferred by the carboxyltransferase to acetyl-CoA to form malonyl-CoA.</text>
</comment>
<comment type="catalytic activity">
    <reaction evidence="1">
        <text>N(6)-carboxybiotinyl-L-lysyl-[protein] + acetyl-CoA = N(6)-biotinyl-L-lysyl-[protein] + malonyl-CoA</text>
        <dbReference type="Rhea" id="RHEA:54728"/>
        <dbReference type="Rhea" id="RHEA-COMP:10505"/>
        <dbReference type="Rhea" id="RHEA-COMP:10506"/>
        <dbReference type="ChEBI" id="CHEBI:57288"/>
        <dbReference type="ChEBI" id="CHEBI:57384"/>
        <dbReference type="ChEBI" id="CHEBI:83144"/>
        <dbReference type="ChEBI" id="CHEBI:83145"/>
        <dbReference type="EC" id="2.1.3.15"/>
    </reaction>
</comment>
<comment type="pathway">
    <text evidence="1">Lipid metabolism; malonyl-CoA biosynthesis; malonyl-CoA from acetyl-CoA: step 1/1.</text>
</comment>
<comment type="subunit">
    <text evidence="1">Acetyl-CoA carboxylase is a heterohexamer composed of biotin carboxyl carrier protein (AccB), biotin carboxylase (AccC) and two subunits each of ACCase subunit alpha (AccA) and ACCase subunit beta (AccD).</text>
</comment>
<comment type="subcellular location">
    <subcellularLocation>
        <location evidence="1">Cytoplasm</location>
    </subcellularLocation>
</comment>
<comment type="similarity">
    <text evidence="1">Belongs to the AccA family.</text>
</comment>